<protein>
    <recommendedName>
        <fullName>Tetratricopeptide repeat protein 23</fullName>
        <shortName>TPR repeat protein 23</shortName>
    </recommendedName>
    <alternativeName>
        <fullName>Cervical cancer proto-oncogene 8 protein</fullName>
        <shortName>HCC-8</shortName>
    </alternativeName>
</protein>
<name>TTC23_HUMAN</name>
<sequence>MQESQETHISNHLDEVVAAVSITHRKKFQNKLLQTALFQPPREKLHLCEEKAKSYSNSHEYKQAVHELVRCVALTRICYGDSHWKLAEAHVNLAQGYLQLKGLSLQAKQHAEKARQILANSIVPPYSENTDVFKFSIELFHTMGRALLSLQKFKEAAENLTKAERLSKELLQCGRIIKEEWIEIEARIRLSFAQVYQGQKKSKEALSHYQAALEYVEISKGETSRECVPILRELAGVEQALGLHDVSINHFLQAHLIILSRSPSQVEAADSAHIVAHAAVASGRHEHHDVAEQYFQESMAHLKDSEGMGRTKFLSIQDEFCHFLQMTGQKERATSILRESLEAKVEAFGDFSPEVAETYRLLGGADLAQGNHSGARKKLKKCLQIQTLLYGPQDKRTLATQQAMGMLSTAPKVASKPRQASKAKVAFCTSIPQDTLLGKARPGTTAD</sequence>
<proteinExistence type="evidence at protein level"/>
<comment type="function">
    <text evidence="1">Participates positively in the ciliary Hedgehog (Hh) signaling.</text>
</comment>
<comment type="subunit">
    <text evidence="1">Found Associated with the EvC complex composed of EFCAB7, IQCE, EVC2 and EVC.</text>
</comment>
<comment type="interaction">
    <interactant intactId="EBI-6447954">
        <id>Q5W5X9</id>
    </interactant>
    <interactant intactId="EBI-3905054">
        <id>P13196</id>
        <label>ALAS1</label>
    </interactant>
    <organismsDiffer>false</organismsDiffer>
    <experiments>3</experiments>
</comment>
<comment type="interaction">
    <interactant intactId="EBI-6447954">
        <id>Q5W5X9</id>
    </interactant>
    <interactant intactId="EBI-711810">
        <id>O14503</id>
        <label>BHLHE40</label>
    </interactant>
    <organismsDiffer>false</organismsDiffer>
    <experiments>3</experiments>
</comment>
<comment type="interaction">
    <interactant intactId="EBI-6447954">
        <id>Q5W5X9</id>
    </interactant>
    <interactant intactId="EBI-748961">
        <id>O95273</id>
        <label>CCNDBP1</label>
    </interactant>
    <organismsDiffer>false</organismsDiffer>
    <experiments>3</experiments>
</comment>
<comment type="interaction">
    <interactant intactId="EBI-6447954">
        <id>Q5W5X9</id>
    </interactant>
    <interactant intactId="EBI-947360">
        <id>Q8N137</id>
        <label>CNTROB</label>
    </interactant>
    <organismsDiffer>false</organismsDiffer>
    <experiments>3</experiments>
</comment>
<comment type="interaction">
    <interactant intactId="EBI-6447954">
        <id>Q5W5X9</id>
    </interactant>
    <interactant intactId="EBI-632965">
        <id>Q9NS37</id>
        <label>CREBZF</label>
    </interactant>
    <organismsDiffer>false</organismsDiffer>
    <experiments>3</experiments>
</comment>
<comment type="interaction">
    <interactant intactId="EBI-6447954">
        <id>Q5W5X9</id>
    </interactant>
    <interactant intactId="EBI-618309">
        <id>Q08379</id>
        <label>GOLGA2</label>
    </interactant>
    <organismsDiffer>false</organismsDiffer>
    <experiments>3</experiments>
</comment>
<comment type="interaction">
    <interactant intactId="EBI-6447954">
        <id>Q5W5X9</id>
    </interactant>
    <interactant intactId="EBI-948001">
        <id>Q15323</id>
        <label>KRT31</label>
    </interactant>
    <organismsDiffer>false</organismsDiffer>
    <experiments>3</experiments>
</comment>
<comment type="interaction">
    <interactant intactId="EBI-6447954">
        <id>Q5W5X9</id>
    </interactant>
    <interactant intactId="EBI-10171697">
        <id>Q6A162</id>
        <label>KRT40</label>
    </interactant>
    <organismsDiffer>false</organismsDiffer>
    <experiments>3</experiments>
</comment>
<comment type="interaction">
    <interactant intactId="EBI-6447954">
        <id>Q5W5X9</id>
    </interactant>
    <interactant intactId="EBI-740738">
        <id>O95751</id>
        <label>LDOC1</label>
    </interactant>
    <organismsDiffer>false</organismsDiffer>
    <experiments>4</experiments>
</comment>
<comment type="interaction">
    <interactant intactId="EBI-6447954">
        <id>Q5W5X9</id>
    </interactant>
    <interactant intactId="EBI-741037">
        <id>Q9BRK4</id>
        <label>LZTS2</label>
    </interactant>
    <organismsDiffer>false</organismsDiffer>
    <experiments>3</experiments>
</comment>
<comment type="interaction">
    <interactant intactId="EBI-6447954">
        <id>Q5W5X9</id>
    </interactant>
    <interactant intactId="EBI-716006">
        <id>Q9Y5V3</id>
        <label>MAGED1</label>
    </interactant>
    <organismsDiffer>false</organismsDiffer>
    <experiments>3</experiments>
</comment>
<comment type="interaction">
    <interactant intactId="EBI-6447954">
        <id>Q5W5X9</id>
    </interactant>
    <interactant intactId="EBI-724076">
        <id>Q99750</id>
        <label>MDFI</label>
    </interactant>
    <organismsDiffer>false</organismsDiffer>
    <experiments>3</experiments>
</comment>
<comment type="interaction">
    <interactant intactId="EBI-6447954">
        <id>Q5W5X9</id>
    </interactant>
    <interactant intactId="EBI-10171633">
        <id>Q96PV4</id>
        <label>PNMA5</label>
    </interactant>
    <organismsDiffer>false</organismsDiffer>
    <experiments>3</experiments>
</comment>
<comment type="interaction">
    <interactant intactId="EBI-6447954">
        <id>Q5W5X9</id>
    </interactant>
    <interactant intactId="EBI-413317">
        <id>Q96R06</id>
        <label>SPAG5</label>
    </interactant>
    <organismsDiffer>false</organismsDiffer>
    <experiments>3</experiments>
</comment>
<comment type="interaction">
    <interactant intactId="EBI-6447954">
        <id>Q5W5X9</id>
    </interactant>
    <interactant intactId="EBI-2212028">
        <id>Q9Y2D8</id>
        <label>SSX2IP</label>
    </interactant>
    <organismsDiffer>false</organismsDiffer>
    <experiments>3</experiments>
</comment>
<comment type="interaction">
    <interactant intactId="EBI-6447954">
        <id>Q5W5X9</id>
    </interactant>
    <interactant intactId="EBI-742268">
        <id>O75478</id>
        <label>TADA2A</label>
    </interactant>
    <organismsDiffer>false</organismsDiffer>
    <experiments>3</experiments>
</comment>
<comment type="interaction">
    <interactant intactId="EBI-6447954">
        <id>Q5W5X9</id>
    </interactant>
    <interactant intactId="EBI-6427325">
        <id>Q9UDY6</id>
        <label>TRIM10</label>
    </interactant>
    <organismsDiffer>false</organismsDiffer>
    <experiments>4</experiments>
</comment>
<comment type="interaction">
    <interactant intactId="EBI-6447954">
        <id>Q5W5X9</id>
    </interactant>
    <interactant intactId="EBI-2130429">
        <id>Q9BYV2</id>
        <label>TRIM54</label>
    </interactant>
    <organismsDiffer>false</organismsDiffer>
    <experiments>3</experiments>
</comment>
<comment type="interaction">
    <interactant intactId="EBI-9090990">
        <id>Q5W5X9-3</id>
    </interactant>
    <interactant intactId="EBI-11743294">
        <id>Q8IZP0-5</id>
        <label>ABI1</label>
    </interactant>
    <organismsDiffer>false</organismsDiffer>
    <experiments>3</experiments>
</comment>
<comment type="interaction">
    <interactant intactId="EBI-9090990">
        <id>Q5W5X9-3</id>
    </interactant>
    <interactant intactId="EBI-2838710">
        <id>Q8NFM4</id>
        <label>ADCY4</label>
    </interactant>
    <organismsDiffer>false</organismsDiffer>
    <experiments>3</experiments>
</comment>
<comment type="interaction">
    <interactant intactId="EBI-9090990">
        <id>Q5W5X9-3</id>
    </interactant>
    <interactant intactId="EBI-8643161">
        <id>Q9NX04</id>
        <label>AIRIM</label>
    </interactant>
    <organismsDiffer>false</organismsDiffer>
    <experiments>3</experiments>
</comment>
<comment type="interaction">
    <interactant intactId="EBI-9090990">
        <id>Q5W5X9-3</id>
    </interactant>
    <interactant intactId="EBI-11524452">
        <id>Q8N9N5-2</id>
        <label>BANP</label>
    </interactant>
    <organismsDiffer>false</organismsDiffer>
    <experiments>3</experiments>
</comment>
<comment type="interaction">
    <interactant intactId="EBI-9090990">
        <id>Q5W5X9-3</id>
    </interactant>
    <interactant intactId="EBI-2548012">
        <id>Q9H2G9</id>
        <label>BLZF1</label>
    </interactant>
    <organismsDiffer>false</organismsDiffer>
    <experiments>5</experiments>
</comment>
<comment type="interaction">
    <interactant intactId="EBI-9090990">
        <id>Q5W5X9-3</id>
    </interactant>
    <interactant intactId="EBI-712912">
        <id>Q9HC52</id>
        <label>CBX8</label>
    </interactant>
    <organismsDiffer>false</organismsDiffer>
    <experiments>3</experiments>
</comment>
<comment type="interaction">
    <interactant intactId="EBI-9090990">
        <id>Q5W5X9-3</id>
    </interactant>
    <interactant intactId="EBI-10171570">
        <id>Q68D86</id>
        <label>CCDC102B</label>
    </interactant>
    <organismsDiffer>false</organismsDiffer>
    <experiments>3</experiments>
</comment>
<comment type="interaction">
    <interactant intactId="EBI-9090990">
        <id>Q5W5X9-3</id>
    </interactant>
    <interactant intactId="EBI-1104933">
        <id>Q8N4L8</id>
        <label>CCDC24</label>
    </interactant>
    <organismsDiffer>false</organismsDiffer>
    <experiments>3</experiments>
</comment>
<comment type="interaction">
    <interactant intactId="EBI-9090990">
        <id>Q5W5X9-3</id>
    </interactant>
    <interactant intactId="EBI-746238">
        <id>Q07002</id>
        <label>CDK18</label>
    </interactant>
    <organismsDiffer>false</organismsDiffer>
    <experiments>3</experiments>
</comment>
<comment type="interaction">
    <interactant intactId="EBI-9090990">
        <id>Q5W5X9-3</id>
    </interactant>
    <interactant intactId="EBI-1181367">
        <id>Q01850</id>
        <label>CDR2</label>
    </interactant>
    <organismsDiffer>false</organismsDiffer>
    <experiments>3</experiments>
</comment>
<comment type="interaction">
    <interactant intactId="EBI-9090990">
        <id>Q5W5X9-3</id>
    </interactant>
    <interactant intactId="EBI-632965">
        <id>Q9NS37</id>
        <label>CREBZF</label>
    </interactant>
    <organismsDiffer>false</organismsDiffer>
    <experiments>3</experiments>
</comment>
<comment type="interaction">
    <interactant intactId="EBI-9090990">
        <id>Q5W5X9-3</id>
    </interactant>
    <interactant intactId="EBI-11962928">
        <id>Q9UI47-2</id>
        <label>CTNNA3</label>
    </interactant>
    <organismsDiffer>false</organismsDiffer>
    <experiments>3</experiments>
</comment>
<comment type="interaction">
    <interactant intactId="EBI-9090990">
        <id>Q5W5X9-3</id>
    </interactant>
    <interactant intactId="EBI-3867333">
        <id>A8MQ03</id>
        <label>CYSRT1</label>
    </interactant>
    <organismsDiffer>false</organismsDiffer>
    <experiments>3</experiments>
</comment>
<comment type="interaction">
    <interactant intactId="EBI-9090990">
        <id>Q5W5X9-3</id>
    </interactant>
    <interactant intactId="EBI-11988027">
        <id>Q9NRI5-2</id>
        <label>DISC1</label>
    </interactant>
    <organismsDiffer>false</organismsDiffer>
    <experiments>3</experiments>
</comment>
<comment type="interaction">
    <interactant intactId="EBI-9090990">
        <id>Q5W5X9-3</id>
    </interactant>
    <interactant intactId="EBI-10968534">
        <id>P50570-2</id>
        <label>DNM2</label>
    </interactant>
    <organismsDiffer>false</organismsDiffer>
    <experiments>3</experiments>
</comment>
<comment type="interaction">
    <interactant intactId="EBI-9090990">
        <id>Q5W5X9-3</id>
    </interactant>
    <interactant intactId="EBI-11958551">
        <id>Q8N7B9-2</id>
        <label>EFCAB3</label>
    </interactant>
    <organismsDiffer>false</organismsDiffer>
    <experiments>3</experiments>
</comment>
<comment type="interaction">
    <interactant intactId="EBI-9090990">
        <id>Q5W5X9-3</id>
    </interactant>
    <interactant intactId="EBI-744099">
        <id>Q9H0I2</id>
        <label>ENKD1</label>
    </interactant>
    <organismsDiffer>false</organismsDiffer>
    <experiments>3</experiments>
</comment>
<comment type="interaction">
    <interactant intactId="EBI-9090990">
        <id>Q5W5X9-3</id>
    </interactant>
    <interactant intactId="EBI-7225287">
        <id>Q96MY7</id>
        <label>FAM161B</label>
    </interactant>
    <organismsDiffer>false</organismsDiffer>
    <experiments>3</experiments>
</comment>
<comment type="interaction">
    <interactant intactId="EBI-9090990">
        <id>Q5W5X9-3</id>
    </interactant>
    <interactant intactId="EBI-2339898">
        <id>Q9NW38</id>
        <label>FANCL</label>
    </interactant>
    <organismsDiffer>false</organismsDiffer>
    <experiments>3</experiments>
</comment>
<comment type="interaction">
    <interactant intactId="EBI-9090990">
        <id>Q5W5X9-3</id>
    </interactant>
    <interactant intactId="EBI-5661036">
        <id>A1L4K1</id>
        <label>FSD2</label>
    </interactant>
    <organismsDiffer>false</organismsDiffer>
    <experiments>3</experiments>
</comment>
<comment type="interaction">
    <interactant intactId="EBI-9090990">
        <id>Q5W5X9-3</id>
    </interactant>
    <interactant intactId="EBI-618309">
        <id>Q08379</id>
        <label>GOLGA2</label>
    </interactant>
    <organismsDiffer>false</organismsDiffer>
    <experiments>3</experiments>
</comment>
<comment type="interaction">
    <interactant intactId="EBI-9090990">
        <id>Q5W5X9-3</id>
    </interactant>
    <interactant intactId="EBI-5916454">
        <id>A6NEM1</id>
        <label>GOLGA6L9</label>
    </interactant>
    <organismsDiffer>false</organismsDiffer>
    <experiments>3</experiments>
</comment>
<comment type="interaction">
    <interactant intactId="EBI-9090990">
        <id>Q5W5X9-3</id>
    </interactant>
    <interactant intactId="EBI-751540">
        <id>O95872</id>
        <label>GPANK1</label>
    </interactant>
    <organismsDiffer>false</organismsDiffer>
    <experiments>3</experiments>
</comment>
<comment type="interaction">
    <interactant intactId="EBI-9090990">
        <id>Q5W5X9-3</id>
    </interactant>
    <interactant intactId="EBI-473189">
        <id>Q96D09</id>
        <label>GPRASP2</label>
    </interactant>
    <organismsDiffer>false</organismsDiffer>
    <experiments>3</experiments>
</comment>
<comment type="interaction">
    <interactant intactId="EBI-9090990">
        <id>Q5W5X9-3</id>
    </interactant>
    <interactant intactId="EBI-717919">
        <id>Q4V328</id>
        <label>GRIPAP1</label>
    </interactant>
    <organismsDiffer>false</organismsDiffer>
    <experiments>3</experiments>
</comment>
<comment type="interaction">
    <interactant intactId="EBI-9090990">
        <id>Q5W5X9-3</id>
    </interactant>
    <interactant intactId="EBI-747754">
        <id>P28799</id>
        <label>GRN</label>
    </interactant>
    <organismsDiffer>false</organismsDiffer>
    <experiments>3</experiments>
</comment>
<comment type="interaction">
    <interactant intactId="EBI-9090990">
        <id>Q5W5X9-3</id>
    </interactant>
    <interactant intactId="EBI-10961706">
        <id>Q96ED9-2</id>
        <label>HOOK2</label>
    </interactant>
    <organismsDiffer>false</organismsDiffer>
    <experiments>3</experiments>
</comment>
<comment type="interaction">
    <interactant intactId="EBI-9090990">
        <id>Q5W5X9-3</id>
    </interactant>
    <interactant intactId="EBI-7116203">
        <id>O75031</id>
        <label>HSF2BP</label>
    </interactant>
    <organismsDiffer>false</organismsDiffer>
    <experiments>3</experiments>
</comment>
<comment type="interaction">
    <interactant intactId="EBI-9090990">
        <id>Q5W5X9-3</id>
    </interactant>
    <interactant intactId="EBI-466029">
        <id>P42858</id>
        <label>HTT</label>
    </interactant>
    <organismsDiffer>false</organismsDiffer>
    <experiments>18</experiments>
</comment>
<comment type="interaction">
    <interactant intactId="EBI-9090990">
        <id>Q5W5X9-3</id>
    </interactant>
    <interactant intactId="EBI-12081118">
        <id>Q1MX18</id>
        <label>INSC</label>
    </interactant>
    <organismsDiffer>false</organismsDiffer>
    <experiments>3</experiments>
</comment>
<comment type="interaction">
    <interactant intactId="EBI-9090990">
        <id>Q5W5X9-3</id>
    </interactant>
    <interactant intactId="EBI-3893098">
        <id>Q6IPM2</id>
        <label>IQCE</label>
    </interactant>
    <organismsDiffer>false</organismsDiffer>
    <experiments>3</experiments>
</comment>
<comment type="interaction">
    <interactant intactId="EBI-9090990">
        <id>Q5W5X9-3</id>
    </interactant>
    <interactant intactId="EBI-749265">
        <id>Q8N6L0</id>
        <label>KASH5</label>
    </interactant>
    <organismsDiffer>false</organismsDiffer>
    <experiments>3</experiments>
</comment>
<comment type="interaction">
    <interactant intactId="EBI-9090990">
        <id>Q5W5X9-3</id>
    </interactant>
    <interactant intactId="EBI-710124">
        <id>O60341</id>
        <label>KDM1A</label>
    </interactant>
    <organismsDiffer>false</organismsDiffer>
    <experiments>3</experiments>
</comment>
<comment type="interaction">
    <interactant intactId="EBI-9090990">
        <id>Q5W5X9-3</id>
    </interactant>
    <interactant intactId="EBI-3437878">
        <id>Q86T90</id>
        <label>KIAA1328</label>
    </interactant>
    <organismsDiffer>false</organismsDiffer>
    <experiments>3</experiments>
</comment>
<comment type="interaction">
    <interactant intactId="EBI-9090990">
        <id>Q5W5X9-3</id>
    </interactant>
    <interactant intactId="EBI-739890">
        <id>Q9P2K6</id>
        <label>KLHL42</label>
    </interactant>
    <organismsDiffer>false</organismsDiffer>
    <experiments>3</experiments>
</comment>
<comment type="interaction">
    <interactant intactId="EBI-9090990">
        <id>Q5W5X9-3</id>
    </interactant>
    <interactant intactId="EBI-739566">
        <id>P19012</id>
        <label>KRT15</label>
    </interactant>
    <organismsDiffer>false</organismsDiffer>
    <experiments>3</experiments>
</comment>
<comment type="interaction">
    <interactant intactId="EBI-9090990">
        <id>Q5W5X9-3</id>
    </interactant>
    <interactant intactId="EBI-356410">
        <id>P08779</id>
        <label>KRT16</label>
    </interactant>
    <organismsDiffer>false</organismsDiffer>
    <experiments>3</experiments>
</comment>
<comment type="interaction">
    <interactant intactId="EBI-9090990">
        <id>Q5W5X9-3</id>
    </interactant>
    <interactant intactId="EBI-3044087">
        <id>Q7Z3Y8</id>
        <label>KRT27</label>
    </interactant>
    <organismsDiffer>false</organismsDiffer>
    <experiments>3</experiments>
</comment>
<comment type="interaction">
    <interactant intactId="EBI-9090990">
        <id>Q5W5X9-3</id>
    </interactant>
    <interactant intactId="EBI-948001">
        <id>Q15323</id>
        <label>KRT31</label>
    </interactant>
    <organismsDiffer>false</organismsDiffer>
    <experiments>3</experiments>
</comment>
<comment type="interaction">
    <interactant intactId="EBI-9090990">
        <id>Q5W5X9-3</id>
    </interactant>
    <interactant intactId="EBI-1047093">
        <id>O76011</id>
        <label>KRT34</label>
    </interactant>
    <organismsDiffer>false</organismsDiffer>
    <experiments>3</experiments>
</comment>
<comment type="interaction">
    <interactant intactId="EBI-9090990">
        <id>Q5W5X9-3</id>
    </interactant>
    <interactant intactId="EBI-11958506">
        <id>O76013-2</id>
        <label>KRT36</label>
    </interactant>
    <organismsDiffer>false</organismsDiffer>
    <experiments>3</experiments>
</comment>
<comment type="interaction">
    <interactant intactId="EBI-9090990">
        <id>Q5W5X9-3</id>
    </interactant>
    <interactant intactId="EBI-10171774">
        <id>P60410</id>
        <label>KRTAP10-8</label>
    </interactant>
    <organismsDiffer>false</organismsDiffer>
    <experiments>3</experiments>
</comment>
<comment type="interaction">
    <interactant intactId="EBI-9090990">
        <id>Q5W5X9-3</id>
    </interactant>
    <interactant intactId="EBI-11911016">
        <id>P80188</id>
        <label>LCN2</label>
    </interactant>
    <organismsDiffer>false</organismsDiffer>
    <experiments>3</experiments>
</comment>
<comment type="interaction">
    <interactant intactId="EBI-9090990">
        <id>Q5W5X9-3</id>
    </interactant>
    <interactant intactId="EBI-740738">
        <id>O95751</id>
        <label>LDOC1</label>
    </interactant>
    <organismsDiffer>false</organismsDiffer>
    <experiments>3</experiments>
</comment>
<comment type="interaction">
    <interactant intactId="EBI-9090990">
        <id>Q5W5X9-3</id>
    </interactant>
    <interactant intactId="EBI-741037">
        <id>Q9BRK4</id>
        <label>LZTS2</label>
    </interactant>
    <organismsDiffer>false</organismsDiffer>
    <experiments>3</experiments>
</comment>
<comment type="interaction">
    <interactant intactId="EBI-9090990">
        <id>Q5W5X9-3</id>
    </interactant>
    <interactant intactId="EBI-716006">
        <id>Q9Y5V3</id>
        <label>MAGED1</label>
    </interactant>
    <organismsDiffer>false</organismsDiffer>
    <experiments>3</experiments>
</comment>
<comment type="interaction">
    <interactant intactId="EBI-9090990">
        <id>Q5W5X9-3</id>
    </interactant>
    <interactant intactId="EBI-11978579">
        <id>O95983-2</id>
        <label>MBD3</label>
    </interactant>
    <organismsDiffer>false</organismsDiffer>
    <experiments>3</experiments>
</comment>
<comment type="interaction">
    <interactant intactId="EBI-9090990">
        <id>Q5W5X9-3</id>
    </interactant>
    <interactant intactId="EBI-724076">
        <id>Q99750</id>
        <label>MDFI</label>
    </interactant>
    <organismsDiffer>false</organismsDiffer>
    <experiments>3</experiments>
</comment>
<comment type="interaction">
    <interactant intactId="EBI-9090990">
        <id>Q5W5X9-3</id>
    </interactant>
    <interactant intactId="EBI-3957138">
        <id>Q86YW9</id>
        <label>MED12L</label>
    </interactant>
    <organismsDiffer>false</organismsDiffer>
    <experiments>3</experiments>
</comment>
<comment type="interaction">
    <interactant intactId="EBI-9090990">
        <id>Q5W5X9-3</id>
    </interactant>
    <interactant intactId="EBI-6165891">
        <id>Q14696</id>
        <label>MESD</label>
    </interactant>
    <organismsDiffer>false</organismsDiffer>
    <experiments>3</experiments>
</comment>
<comment type="interaction">
    <interactant intactId="EBI-9090990">
        <id>Q5W5X9-3</id>
    </interactant>
    <interactant intactId="EBI-1048159">
        <id>P55081</id>
        <label>MFAP1</label>
    </interactant>
    <organismsDiffer>false</organismsDiffer>
    <experiments>3</experiments>
</comment>
<comment type="interaction">
    <interactant intactId="EBI-9090990">
        <id>Q5W5X9-3</id>
    </interactant>
    <interactant intactId="EBI-10172526">
        <id>Q9UJV3-2</id>
        <label>MID2</label>
    </interactant>
    <organismsDiffer>false</organismsDiffer>
    <experiments>3</experiments>
</comment>
<comment type="interaction">
    <interactant intactId="EBI-9090990">
        <id>Q5W5X9-3</id>
    </interactant>
    <interactant intactId="EBI-2548751">
        <id>Q8TD10</id>
        <label>MIPOL1</label>
    </interactant>
    <organismsDiffer>false</organismsDiffer>
    <experiments>3</experiments>
</comment>
<comment type="interaction">
    <interactant intactId="EBI-9090990">
        <id>Q5W5X9-3</id>
    </interactant>
    <interactant intactId="EBI-2340269">
        <id>Q13064</id>
        <label>MKRN3</label>
    </interactant>
    <organismsDiffer>false</organismsDiffer>
    <experiments>3</experiments>
</comment>
<comment type="interaction">
    <interactant intactId="EBI-9090990">
        <id>Q5W5X9-3</id>
    </interactant>
    <interactant intactId="EBI-743811">
        <id>Q8NEH6</id>
        <label>MNS1</label>
    </interactant>
    <organismsDiffer>false</organismsDiffer>
    <experiments>3</experiments>
</comment>
<comment type="interaction">
    <interactant intactId="EBI-9090990">
        <id>Q5W5X9-3</id>
    </interactant>
    <interactant intactId="EBI-11522433">
        <id>Q5JR59-3</id>
        <label>MTUS2</label>
    </interactant>
    <organismsDiffer>false</organismsDiffer>
    <experiments>4</experiments>
</comment>
<comment type="interaction">
    <interactant intactId="EBI-9090990">
        <id>Q5W5X9-3</id>
    </interactant>
    <interactant intactId="EBI-475646">
        <id>P07196</id>
        <label>NEFL</label>
    </interactant>
    <organismsDiffer>false</organismsDiffer>
    <experiments>3</experiments>
</comment>
<comment type="interaction">
    <interactant intactId="EBI-9090990">
        <id>Q5W5X9-3</id>
    </interactant>
    <interactant intactId="EBI-17490746">
        <id>A8MTQ0</id>
        <label>NOTO</label>
    </interactant>
    <organismsDiffer>false</organismsDiffer>
    <experiments>3</experiments>
</comment>
<comment type="interaction">
    <interactant intactId="EBI-9090990">
        <id>Q5W5X9-3</id>
    </interactant>
    <interactant intactId="EBI-12028784">
        <id>Q6X4W1-2</id>
        <label>NSMF</label>
    </interactant>
    <organismsDiffer>false</organismsDiffer>
    <experiments>3</experiments>
</comment>
<comment type="interaction">
    <interactant intactId="EBI-9090990">
        <id>Q5W5X9-3</id>
    </interactant>
    <interactant intactId="EBI-79165">
        <id>Q9NRD5</id>
        <label>PICK1</label>
    </interactant>
    <organismsDiffer>false</organismsDiffer>
    <experiments>3</experiments>
</comment>
<comment type="interaction">
    <interactant intactId="EBI-9090990">
        <id>Q5W5X9-3</id>
    </interactant>
    <interactant intactId="EBI-10232538">
        <id>Q8WWB5</id>
        <label>PIH1D2</label>
    </interactant>
    <organismsDiffer>false</organismsDiffer>
    <experiments>3</experiments>
</comment>
<comment type="interaction">
    <interactant intactId="EBI-9090990">
        <id>Q5W5X9-3</id>
    </interactant>
    <interactant intactId="EBI-949255">
        <id>Q58EX7</id>
        <label>PLEKHG4</label>
    </interactant>
    <organismsDiffer>false</organismsDiffer>
    <experiments>3</experiments>
</comment>
<comment type="interaction">
    <interactant intactId="EBI-9090990">
        <id>Q5W5X9-3</id>
    </interactant>
    <interactant intactId="EBI-302345">
        <id>Q8ND90</id>
        <label>PNMA1</label>
    </interactant>
    <organismsDiffer>false</organismsDiffer>
    <experiments>3</experiments>
</comment>
<comment type="interaction">
    <interactant intactId="EBI-9090990">
        <id>Q5W5X9-3</id>
    </interactant>
    <interactant intactId="EBI-12818681">
        <id>Q9H1A7</id>
        <label>POLR2J3</label>
    </interactant>
    <organismsDiffer>false</organismsDiffer>
    <experiments>3</experiments>
</comment>
<comment type="interaction">
    <interactant intactId="EBI-9090990">
        <id>Q5W5X9-3</id>
    </interactant>
    <interactant intactId="EBI-12029004">
        <id>P78424</id>
        <label>POU6F2</label>
    </interactant>
    <organismsDiffer>false</organismsDiffer>
    <experiments>3</experiments>
</comment>
<comment type="interaction">
    <interactant intactId="EBI-9090990">
        <id>Q5W5X9-3</id>
    </interactant>
    <interactant intactId="EBI-710402">
        <id>Q96I34</id>
        <label>PPP1R16A</label>
    </interactant>
    <organismsDiffer>false</organismsDiffer>
    <experiments>3</experiments>
</comment>
<comment type="interaction">
    <interactant intactId="EBI-9090990">
        <id>Q5W5X9-3</id>
    </interactant>
    <interactant intactId="EBI-11320284">
        <id>Q9NQX0</id>
        <label>PRDM6</label>
    </interactant>
    <organismsDiffer>false</organismsDiffer>
    <experiments>3</experiments>
</comment>
<comment type="interaction">
    <interactant intactId="EBI-9090990">
        <id>Q5W5X9-3</id>
    </interactant>
    <interactant intactId="EBI-1053424">
        <id>O43741</id>
        <label>PRKAB2</label>
    </interactant>
    <organismsDiffer>false</organismsDiffer>
    <experiments>3</experiments>
</comment>
<comment type="interaction">
    <interactant intactId="EBI-9090990">
        <id>Q5W5X9-3</id>
    </interactant>
    <interactant intactId="EBI-2798416">
        <id>Q99633</id>
        <label>PRPF18</label>
    </interactant>
    <organismsDiffer>false</organismsDiffer>
    <experiments>3</experiments>
</comment>
<comment type="interaction">
    <interactant intactId="EBI-9090990">
        <id>Q5W5X9-3</id>
    </interactant>
    <interactant intactId="EBI-752074">
        <id>P41219</id>
        <label>PRPH</label>
    </interactant>
    <organismsDiffer>false</organismsDiffer>
    <experiments>3</experiments>
</comment>
<comment type="interaction">
    <interactant intactId="EBI-9090990">
        <id>Q5W5X9-3</id>
    </interactant>
    <interactant intactId="EBI-749195">
        <id>P60891</id>
        <label>PRPS1</label>
    </interactant>
    <organismsDiffer>false</organismsDiffer>
    <experiments>3</experiments>
</comment>
<comment type="interaction">
    <interactant intactId="EBI-9090990">
        <id>Q5W5X9-3</id>
    </interactant>
    <interactant intactId="EBI-11974061">
        <id>Q9UIG4</id>
        <label>PSORS1C2</label>
    </interactant>
    <organismsDiffer>false</organismsDiffer>
    <experiments>3</experiments>
</comment>
<comment type="interaction">
    <interactant intactId="EBI-9090990">
        <id>Q5W5X9-3</id>
    </interactant>
    <interactant intactId="EBI-1055693">
        <id>O75771</id>
        <label>RAD51D</label>
    </interactant>
    <organismsDiffer>false</organismsDiffer>
    <experiments>3</experiments>
</comment>
<comment type="interaction">
    <interactant intactId="EBI-9090990">
        <id>Q5W5X9-3</id>
    </interactant>
    <interactant intactId="EBI-2340624">
        <id>Q9BYM8</id>
        <label>RBCK1</label>
    </interactant>
    <organismsDiffer>false</organismsDiffer>
    <experiments>3</experiments>
</comment>
<comment type="interaction">
    <interactant intactId="EBI-9090990">
        <id>Q5W5X9-3</id>
    </interactant>
    <interactant intactId="EBI-14835966">
        <id>Q08648-4</id>
        <label>SPAG11B</label>
    </interactant>
    <organismsDiffer>false</organismsDiffer>
    <experiments>3</experiments>
</comment>
<comment type="interaction">
    <interactant intactId="EBI-9090990">
        <id>Q5W5X9-3</id>
    </interactant>
    <interactant intactId="EBI-11959123">
        <id>Q99932-2</id>
        <label>SPAG8</label>
    </interactant>
    <organismsDiffer>false</organismsDiffer>
    <experiments>3</experiments>
</comment>
<comment type="interaction">
    <interactant intactId="EBI-9090990">
        <id>Q5W5X9-3</id>
    </interactant>
    <interactant intactId="EBI-12811275">
        <id>O95238</id>
        <label>SPDEF</label>
    </interactant>
    <organismsDiffer>false</organismsDiffer>
    <experiments>3</experiments>
</comment>
<comment type="interaction">
    <interactant intactId="EBI-9090990">
        <id>Q5W5X9-3</id>
    </interactant>
    <interactant intactId="EBI-10301068">
        <id>Q9BXU3</id>
        <label>TEX13A</label>
    </interactant>
    <organismsDiffer>false</organismsDiffer>
    <experiments>3</experiments>
</comment>
<comment type="interaction">
    <interactant intactId="EBI-9090990">
        <id>Q5W5X9-3</id>
    </interactant>
    <interactant intactId="EBI-11741437">
        <id>Q08117-2</id>
        <label>TLE5</label>
    </interactant>
    <organismsDiffer>false</organismsDiffer>
    <experiments>3</experiments>
</comment>
<comment type="interaction">
    <interactant intactId="EBI-9090990">
        <id>Q5W5X9-3</id>
    </interactant>
    <interactant intactId="EBI-355744">
        <id>Q12933</id>
        <label>TRAF2</label>
    </interactant>
    <organismsDiffer>false</organismsDiffer>
    <experiments>3</experiments>
</comment>
<comment type="interaction">
    <interactant intactId="EBI-9090990">
        <id>Q5W5X9-3</id>
    </interactant>
    <interactant intactId="EBI-8451480">
        <id>O75865-2</id>
        <label>TRAPPC6A</label>
    </interactant>
    <organismsDiffer>false</organismsDiffer>
    <experiments>3</experiments>
</comment>
<comment type="interaction">
    <interactant intactId="EBI-9090990">
        <id>Q5W5X9-3</id>
    </interactant>
    <interactant intactId="EBI-492476">
        <id>Q96RU7</id>
        <label>TRIB3</label>
    </interactant>
    <organismsDiffer>false</organismsDiffer>
    <experiments>3</experiments>
</comment>
<comment type="interaction">
    <interactant intactId="EBI-9090990">
        <id>Q5W5X9-3</id>
    </interactant>
    <interactant intactId="EBI-742790">
        <id>Q13049</id>
        <label>TRIM32</label>
    </interactant>
    <organismsDiffer>false</organismsDiffer>
    <experiments>3</experiments>
</comment>
<comment type="interaction">
    <interactant intactId="EBI-9090990">
        <id>Q5W5X9-3</id>
    </interactant>
    <interactant intactId="EBI-2130429">
        <id>Q9BYV2</id>
        <label>TRIM54</label>
    </interactant>
    <organismsDiffer>false</organismsDiffer>
    <experiments>3</experiments>
</comment>
<comment type="interaction">
    <interactant intactId="EBI-9090990">
        <id>Q5W5X9-3</id>
    </interactant>
    <interactant intactId="EBI-10259086">
        <id>Q86UV6-2</id>
        <label>TRIM74</label>
    </interactant>
    <organismsDiffer>false</organismsDiffer>
    <experiments>3</experiments>
</comment>
<comment type="interaction">
    <interactant intactId="EBI-9090990">
        <id>Q5W5X9-3</id>
    </interactant>
    <interactant intactId="EBI-742327">
        <id>Q15654</id>
        <label>TRIP6</label>
    </interactant>
    <organismsDiffer>false</organismsDiffer>
    <experiments>3</experiments>
</comment>
<comment type="interaction">
    <interactant intactId="EBI-9090990">
        <id>Q5W5X9-3</id>
    </interactant>
    <interactant intactId="EBI-10241197">
        <id>Q3SY00</id>
        <label>TSGA10IP</label>
    </interactant>
    <organismsDiffer>false</organismsDiffer>
    <experiments>3</experiments>
</comment>
<comment type="interaction">
    <interactant intactId="EBI-9090990">
        <id>Q5W5X9-3</id>
    </interactant>
    <interactant intactId="EBI-11524408">
        <id>Q5T124-6</id>
        <label>UBXN11</label>
    </interactant>
    <organismsDiffer>false</organismsDiffer>
    <experiments>3</experiments>
</comment>
<comment type="interaction">
    <interactant intactId="EBI-9090990">
        <id>Q5W5X9-3</id>
    </interactant>
    <interactant intactId="EBI-739895">
        <id>Q8N6Y0</id>
        <label>USHBP1</label>
    </interactant>
    <organismsDiffer>false</organismsDiffer>
    <experiments>3</experiments>
</comment>
<comment type="interaction">
    <interactant intactId="EBI-9090990">
        <id>Q5W5X9-3</id>
    </interactant>
    <interactant intactId="EBI-720609">
        <id>O76024</id>
        <label>WFS1</label>
    </interactant>
    <organismsDiffer>false</organismsDiffer>
    <experiments>3</experiments>
</comment>
<comment type="interaction">
    <interactant intactId="EBI-9090990">
        <id>Q5W5X9-3</id>
    </interactant>
    <interactant intactId="EBI-517127">
        <id>P98170</id>
        <label>XIAP</label>
    </interactant>
    <organismsDiffer>false</organismsDiffer>
    <experiments>3</experiments>
</comment>
<comment type="interaction">
    <interactant intactId="EBI-9090990">
        <id>Q5W5X9-3</id>
    </interactant>
    <interactant intactId="EBI-372110">
        <id>Q9H0D6</id>
        <label>XRN2</label>
    </interactant>
    <organismsDiffer>false</organismsDiffer>
    <experiments>3</experiments>
</comment>
<comment type="interaction">
    <interactant intactId="EBI-9090990">
        <id>Q5W5X9-3</id>
    </interactant>
    <interactant intactId="EBI-740037">
        <id>O96006</id>
        <label>ZBED1</label>
    </interactant>
    <organismsDiffer>false</organismsDiffer>
    <experiments>3</experiments>
</comment>
<comment type="interaction">
    <interactant intactId="EBI-9090990">
        <id>Q5W5X9-3</id>
    </interactant>
    <interactant intactId="EBI-711925">
        <id>Q05516</id>
        <label>ZBTB16</label>
    </interactant>
    <organismsDiffer>false</organismsDiffer>
    <experiments>3</experiments>
</comment>
<comment type="interaction">
    <interactant intactId="EBI-9090990">
        <id>Q5W5X9-3</id>
    </interactant>
    <interactant intactId="EBI-12287587">
        <id>B2RXF5</id>
        <label>ZBTB42</label>
    </interactant>
    <organismsDiffer>false</organismsDiffer>
    <experiments>3</experiments>
</comment>
<comment type="interaction">
    <interactant intactId="EBI-9090990">
        <id>Q5W5X9-3</id>
    </interactant>
    <interactant intactId="EBI-10237226">
        <id>Q15911-2</id>
        <label>ZFHX3</label>
    </interactant>
    <organismsDiffer>false</organismsDiffer>
    <experiments>3</experiments>
</comment>
<comment type="interaction">
    <interactant intactId="EBI-9090990">
        <id>Q5W5X9-3</id>
    </interactant>
    <interactant intactId="EBI-8656416">
        <id>Q68DK2-5</id>
        <label>ZFYVE26</label>
    </interactant>
    <organismsDiffer>false</organismsDiffer>
    <experiments>3</experiments>
</comment>
<comment type="interaction">
    <interactant intactId="EBI-9090990">
        <id>Q5W5X9-3</id>
    </interactant>
    <interactant intactId="EBI-11962760">
        <id>Q9NZV7</id>
        <label>ZIM2</label>
    </interactant>
    <organismsDiffer>false</organismsDiffer>
    <experiments>3</experiments>
</comment>
<comment type="interaction">
    <interactant intactId="EBI-9090990">
        <id>Q5W5X9-3</id>
    </interactant>
    <interactant intactId="EBI-11741890">
        <id>Q86VK4-3</id>
        <label>ZNF410</label>
    </interactant>
    <organismsDiffer>false</organismsDiffer>
    <experiments>3</experiments>
</comment>
<comment type="interaction">
    <interactant intactId="EBI-9090990">
        <id>Q5W5X9-3</id>
    </interactant>
    <interactant intactId="EBI-740727">
        <id>Q8TAU3</id>
        <label>ZNF417</label>
    </interactant>
    <organismsDiffer>false</organismsDiffer>
    <experiments>3</experiments>
</comment>
<comment type="subcellular location">
    <subcellularLocation>
        <location evidence="1">Cell projection</location>
        <location evidence="1">Cilium</location>
    </subcellularLocation>
    <text evidence="1">Colocalizes with EVC and IQCE at the EvC zone of primary cilia.</text>
</comment>
<comment type="alternative products">
    <event type="alternative splicing"/>
    <isoform>
        <id>Q5W5X9-1</id>
        <name>1</name>
        <sequence type="displayed"/>
    </isoform>
    <isoform>
        <id>Q5W5X9-2</id>
        <name>2</name>
        <sequence type="described" ref="VSP_026017"/>
    </isoform>
    <isoform>
        <id>Q5W5X9-3</id>
        <name>3</name>
        <sequence type="described" ref="VSP_026018"/>
    </isoform>
</comment>
<comment type="miscellaneous">
    <molecule>Isoform 3</molecule>
    <text evidence="4">May be produced at very low levels due to a premature stop codon in the mRNA, leading to nonsense-mediated mRNA decay.</text>
</comment>
<comment type="sequence caution" evidence="4">
    <conflict type="erroneous initiation">
        <sequence resource="EMBL-CDS" id="BAB14144"/>
    </conflict>
    <text>Truncated N-terminus.</text>
</comment>
<gene>
    <name type="primary">TTC23</name>
    <name type="ORF">HCC8</name>
</gene>
<feature type="chain" id="PRO_0000289548" description="Tetratricopeptide repeat protein 23">
    <location>
        <begin position="1"/>
        <end position="447"/>
    </location>
</feature>
<feature type="repeat" description="TPR 1">
    <location>
        <begin position="45"/>
        <end position="78"/>
    </location>
</feature>
<feature type="repeat" description="TPR 2">
    <location>
        <begin position="137"/>
        <end position="170"/>
    </location>
</feature>
<feature type="repeat" description="TPR 3">
    <location>
        <begin position="186"/>
        <end position="219"/>
    </location>
</feature>
<feature type="repeat" description="TPR 4">
    <location>
        <begin position="356"/>
        <end position="389"/>
    </location>
</feature>
<feature type="splice variant" id="VSP_026017" description="In isoform 2." evidence="2">
    <original>CLQIQTLLYGPQDKRTLATQQAMGMLSTAPKVASKPRQASKAKVAFCTSIPQDTLLGKARPGTTAD</original>
    <variation>VKLEPVLTRD</variation>
    <location>
        <begin position="382"/>
        <end position="447"/>
    </location>
</feature>
<feature type="splice variant" id="VSP_026018" description="In isoform 3." evidence="3">
    <original>CLQIQTLLYGPQDKRTLATQQAMGMLSTAPKVASKPRQASKAKVAFCTSIPQDTLLGKARPGTTAD</original>
    <variation>GDLSFLLSATLP</variation>
    <location>
        <begin position="382"/>
        <end position="447"/>
    </location>
</feature>
<feature type="sequence conflict" description="In Ref. 2; BAD96300." evidence="4" ref="2">
    <original>G</original>
    <variation>E</variation>
    <location>
        <position position="374"/>
    </location>
</feature>
<reference key="1">
    <citation type="submission" date="2001-08" db="EMBL/GenBank/DDBJ databases">
        <title>Identification of a new human proto-oncogene, HCC-8.</title>
        <authorList>
            <person name="Kim J.W."/>
        </authorList>
    </citation>
    <scope>NUCLEOTIDE SEQUENCE [LARGE SCALE MRNA] (ISOFORM 1)</scope>
</reference>
<reference key="2">
    <citation type="journal article" date="2004" name="Nat. Genet.">
        <title>Complete sequencing and characterization of 21,243 full-length human cDNAs.</title>
        <authorList>
            <person name="Ota T."/>
            <person name="Suzuki Y."/>
            <person name="Nishikawa T."/>
            <person name="Otsuki T."/>
            <person name="Sugiyama T."/>
            <person name="Irie R."/>
            <person name="Wakamatsu A."/>
            <person name="Hayashi K."/>
            <person name="Sato H."/>
            <person name="Nagai K."/>
            <person name="Kimura K."/>
            <person name="Makita H."/>
            <person name="Sekine M."/>
            <person name="Obayashi M."/>
            <person name="Nishi T."/>
            <person name="Shibahara T."/>
            <person name="Tanaka T."/>
            <person name="Ishii S."/>
            <person name="Yamamoto J."/>
            <person name="Saito K."/>
            <person name="Kawai Y."/>
            <person name="Isono Y."/>
            <person name="Nakamura Y."/>
            <person name="Nagahari K."/>
            <person name="Murakami K."/>
            <person name="Yasuda T."/>
            <person name="Iwayanagi T."/>
            <person name="Wagatsuma M."/>
            <person name="Shiratori A."/>
            <person name="Sudo H."/>
            <person name="Hosoiri T."/>
            <person name="Kaku Y."/>
            <person name="Kodaira H."/>
            <person name="Kondo H."/>
            <person name="Sugawara M."/>
            <person name="Takahashi M."/>
            <person name="Kanda K."/>
            <person name="Yokoi T."/>
            <person name="Furuya T."/>
            <person name="Kikkawa E."/>
            <person name="Omura Y."/>
            <person name="Abe K."/>
            <person name="Kamihara K."/>
            <person name="Katsuta N."/>
            <person name="Sato K."/>
            <person name="Tanikawa M."/>
            <person name="Yamazaki M."/>
            <person name="Ninomiya K."/>
            <person name="Ishibashi T."/>
            <person name="Yamashita H."/>
            <person name="Murakawa K."/>
            <person name="Fujimori K."/>
            <person name="Tanai H."/>
            <person name="Kimata M."/>
            <person name="Watanabe M."/>
            <person name="Hiraoka S."/>
            <person name="Chiba Y."/>
            <person name="Ishida S."/>
            <person name="Ono Y."/>
            <person name="Takiguchi S."/>
            <person name="Watanabe S."/>
            <person name="Yosida M."/>
            <person name="Hotuta T."/>
            <person name="Kusano J."/>
            <person name="Kanehori K."/>
            <person name="Takahashi-Fujii A."/>
            <person name="Hara H."/>
            <person name="Tanase T.-O."/>
            <person name="Nomura Y."/>
            <person name="Togiya S."/>
            <person name="Komai F."/>
            <person name="Hara R."/>
            <person name="Takeuchi K."/>
            <person name="Arita M."/>
            <person name="Imose N."/>
            <person name="Musashino K."/>
            <person name="Yuuki H."/>
            <person name="Oshima A."/>
            <person name="Sasaki N."/>
            <person name="Aotsuka S."/>
            <person name="Yoshikawa Y."/>
            <person name="Matsunawa H."/>
            <person name="Ichihara T."/>
            <person name="Shiohata N."/>
            <person name="Sano S."/>
            <person name="Moriya S."/>
            <person name="Momiyama H."/>
            <person name="Satoh N."/>
            <person name="Takami S."/>
            <person name="Terashima Y."/>
            <person name="Suzuki O."/>
            <person name="Nakagawa S."/>
            <person name="Senoh A."/>
            <person name="Mizoguchi H."/>
            <person name="Goto Y."/>
            <person name="Shimizu F."/>
            <person name="Wakebe H."/>
            <person name="Hishigaki H."/>
            <person name="Watanabe T."/>
            <person name="Sugiyama A."/>
            <person name="Takemoto M."/>
            <person name="Kawakami B."/>
            <person name="Yamazaki M."/>
            <person name="Watanabe K."/>
            <person name="Kumagai A."/>
            <person name="Itakura S."/>
            <person name="Fukuzumi Y."/>
            <person name="Fujimori Y."/>
            <person name="Komiyama M."/>
            <person name="Tashiro H."/>
            <person name="Tanigami A."/>
            <person name="Fujiwara T."/>
            <person name="Ono T."/>
            <person name="Yamada K."/>
            <person name="Fujii Y."/>
            <person name="Ozaki K."/>
            <person name="Hirao M."/>
            <person name="Ohmori Y."/>
            <person name="Kawabata A."/>
            <person name="Hikiji T."/>
            <person name="Kobatake N."/>
            <person name="Inagaki H."/>
            <person name="Ikema Y."/>
            <person name="Okamoto S."/>
            <person name="Okitani R."/>
            <person name="Kawakami T."/>
            <person name="Noguchi S."/>
            <person name="Itoh T."/>
            <person name="Shigeta K."/>
            <person name="Senba T."/>
            <person name="Matsumura K."/>
            <person name="Nakajima Y."/>
            <person name="Mizuno T."/>
            <person name="Morinaga M."/>
            <person name="Sasaki M."/>
            <person name="Togashi T."/>
            <person name="Oyama M."/>
            <person name="Hata H."/>
            <person name="Watanabe M."/>
            <person name="Komatsu T."/>
            <person name="Mizushima-Sugano J."/>
            <person name="Satoh T."/>
            <person name="Shirai Y."/>
            <person name="Takahashi Y."/>
            <person name="Nakagawa K."/>
            <person name="Okumura K."/>
            <person name="Nagase T."/>
            <person name="Nomura N."/>
            <person name="Kikuchi H."/>
            <person name="Masuho Y."/>
            <person name="Yamashita R."/>
            <person name="Nakai K."/>
            <person name="Yada T."/>
            <person name="Nakamura Y."/>
            <person name="Ohara O."/>
            <person name="Isogai T."/>
            <person name="Sugano S."/>
        </authorList>
    </citation>
    <scope>NUCLEOTIDE SEQUENCE [LARGE SCALE MRNA] (ISOFORMS 1 AND 2)</scope>
    <source>
        <tissue>Coronary artery</tissue>
        <tissue>Placenta</tissue>
    </source>
</reference>
<reference key="3">
    <citation type="journal article" date="2004" name="Genome Res.">
        <title>The status, quality, and expansion of the NIH full-length cDNA project: the Mammalian Gene Collection (MGC).</title>
        <authorList>
            <consortium name="The MGC Project Team"/>
        </authorList>
    </citation>
    <scope>NUCLEOTIDE SEQUENCE [LARGE SCALE MRNA] (ISOFORM 3)</scope>
    <source>
        <tissue>Colon</tissue>
    </source>
</reference>
<evidence type="ECO:0000250" key="1">
    <source>
        <dbReference type="UniProtKB" id="Q8CHY7"/>
    </source>
</evidence>
<evidence type="ECO:0000303" key="2">
    <source>
    </source>
</evidence>
<evidence type="ECO:0000303" key="3">
    <source>
    </source>
</evidence>
<evidence type="ECO:0000305" key="4"/>
<keyword id="KW-0025">Alternative splicing</keyword>
<keyword id="KW-0966">Cell projection</keyword>
<keyword id="KW-1267">Proteomics identification</keyword>
<keyword id="KW-1185">Reference proteome</keyword>
<keyword id="KW-0677">Repeat</keyword>
<keyword id="KW-0802">TPR repeat</keyword>
<organism>
    <name type="scientific">Homo sapiens</name>
    <name type="common">Human</name>
    <dbReference type="NCBI Taxonomy" id="9606"/>
    <lineage>
        <taxon>Eukaryota</taxon>
        <taxon>Metazoa</taxon>
        <taxon>Chordata</taxon>
        <taxon>Craniata</taxon>
        <taxon>Vertebrata</taxon>
        <taxon>Euteleostomi</taxon>
        <taxon>Mammalia</taxon>
        <taxon>Eutheria</taxon>
        <taxon>Euarchontoglires</taxon>
        <taxon>Primates</taxon>
        <taxon>Haplorrhini</taxon>
        <taxon>Catarrhini</taxon>
        <taxon>Hominidae</taxon>
        <taxon>Homo</taxon>
    </lineage>
</organism>
<dbReference type="EMBL" id="AF411456">
    <property type="protein sequence ID" value="AAQ03215.1"/>
    <property type="molecule type" value="mRNA"/>
</dbReference>
<dbReference type="EMBL" id="AK022634">
    <property type="protein sequence ID" value="BAB14144.1"/>
    <property type="status" value="ALT_INIT"/>
    <property type="molecule type" value="mRNA"/>
</dbReference>
<dbReference type="EMBL" id="AK023230">
    <property type="protein sequence ID" value="BAB14480.1"/>
    <property type="molecule type" value="mRNA"/>
</dbReference>
<dbReference type="EMBL" id="AK222580">
    <property type="protein sequence ID" value="BAD96300.1"/>
    <property type="molecule type" value="mRNA"/>
</dbReference>
<dbReference type="EMBL" id="AK291690">
    <property type="protein sequence ID" value="BAF84379.1"/>
    <property type="molecule type" value="mRNA"/>
</dbReference>
<dbReference type="EMBL" id="BC015728">
    <property type="protein sequence ID" value="AAH15728.1"/>
    <property type="molecule type" value="mRNA"/>
</dbReference>
<dbReference type="CCDS" id="CCDS10379.2">
    <molecule id="Q5W5X9-1"/>
</dbReference>
<dbReference type="RefSeq" id="NP_001275544.1">
    <molecule id="Q5W5X9-1"/>
    <property type="nucleotide sequence ID" value="NM_001288615.3"/>
</dbReference>
<dbReference type="RefSeq" id="NP_001275545.1">
    <molecule id="Q5W5X9-1"/>
    <property type="nucleotide sequence ID" value="NM_001288616.3"/>
</dbReference>
<dbReference type="RefSeq" id="NP_001340798.1">
    <molecule id="Q5W5X9-1"/>
    <property type="nucleotide sequence ID" value="NM_001353869.2"/>
</dbReference>
<dbReference type="RefSeq" id="XP_016878001.1">
    <property type="nucleotide sequence ID" value="XM_017022512.1"/>
</dbReference>
<dbReference type="RefSeq" id="XP_016878002.1">
    <property type="nucleotide sequence ID" value="XM_017022513.1"/>
</dbReference>
<dbReference type="RefSeq" id="XP_016878003.1">
    <property type="nucleotide sequence ID" value="XM_017022514.1"/>
</dbReference>
<dbReference type="RefSeq" id="XP_016878004.1">
    <property type="nucleotide sequence ID" value="XM_017022515.1"/>
</dbReference>
<dbReference type="RefSeq" id="XP_016878005.1">
    <property type="nucleotide sequence ID" value="XM_017022516.1"/>
</dbReference>
<dbReference type="RefSeq" id="XP_016878006.1">
    <property type="nucleotide sequence ID" value="XM_017022517.1"/>
</dbReference>
<dbReference type="RefSeq" id="XP_016878007.1">
    <molecule id="Q5W5X9-1"/>
    <property type="nucleotide sequence ID" value="XM_017022518.2"/>
</dbReference>
<dbReference type="RefSeq" id="XP_054234620.1">
    <molecule id="Q5W5X9-1"/>
    <property type="nucleotide sequence ID" value="XM_054378645.1"/>
</dbReference>
<dbReference type="SMR" id="Q5W5X9"/>
<dbReference type="BioGRID" id="122349">
    <property type="interactions" value="103"/>
</dbReference>
<dbReference type="FunCoup" id="Q5W5X9">
    <property type="interactions" value="106"/>
</dbReference>
<dbReference type="IntAct" id="Q5W5X9">
    <property type="interactions" value="117"/>
</dbReference>
<dbReference type="MINT" id="Q5W5X9"/>
<dbReference type="STRING" id="9606.ENSP00000377690"/>
<dbReference type="GlyGen" id="Q5W5X9">
    <property type="glycosylation" value="2 sites, 1 O-linked glycan (2 sites)"/>
</dbReference>
<dbReference type="iPTMnet" id="Q5W5X9"/>
<dbReference type="PhosphoSitePlus" id="Q5W5X9"/>
<dbReference type="BioMuta" id="TTC23"/>
<dbReference type="DMDM" id="74708246"/>
<dbReference type="jPOST" id="Q5W5X9"/>
<dbReference type="MassIVE" id="Q5W5X9"/>
<dbReference type="PaxDb" id="9606-ENSP00000377690"/>
<dbReference type="PeptideAtlas" id="Q5W5X9"/>
<dbReference type="ProteomicsDB" id="65810">
    <molecule id="Q5W5X9-1"/>
</dbReference>
<dbReference type="ProteomicsDB" id="65811">
    <molecule id="Q5W5X9-2"/>
</dbReference>
<dbReference type="ProteomicsDB" id="65812">
    <molecule id="Q5W5X9-3"/>
</dbReference>
<dbReference type="Antibodypedia" id="29144">
    <property type="antibodies" value="173 antibodies from 24 providers"/>
</dbReference>
<dbReference type="DNASU" id="64927"/>
<dbReference type="Ensembl" id="ENST00000262074.8">
    <molecule id="Q5W5X9-3"/>
    <property type="protein sequence ID" value="ENSP00000262074.5"/>
    <property type="gene ID" value="ENSG00000103852.13"/>
</dbReference>
<dbReference type="Ensembl" id="ENST00000394129.6">
    <molecule id="Q5W5X9-2"/>
    <property type="protein sequence ID" value="ENSP00000457901.1"/>
    <property type="gene ID" value="ENSG00000103852.13"/>
</dbReference>
<dbReference type="Ensembl" id="ENST00000394132.7">
    <molecule id="Q5W5X9-1"/>
    <property type="protein sequence ID" value="ENSP00000377690.2"/>
    <property type="gene ID" value="ENSG00000103852.13"/>
</dbReference>
<dbReference type="Ensembl" id="ENST00000394135.7">
    <molecule id="Q5W5X9-1"/>
    <property type="protein sequence ID" value="ENSP00000377692.3"/>
    <property type="gene ID" value="ENSG00000103852.13"/>
</dbReference>
<dbReference type="Ensembl" id="ENST00000459771.5">
    <molecule id="Q5W5X9-3"/>
    <property type="protein sequence ID" value="ENSP00000433162.1"/>
    <property type="gene ID" value="ENSG00000103852.13"/>
</dbReference>
<dbReference type="Ensembl" id="ENST00000558663.5">
    <molecule id="Q5W5X9-1"/>
    <property type="protein sequence ID" value="ENSP00000452923.1"/>
    <property type="gene ID" value="ENSG00000103852.13"/>
</dbReference>
<dbReference type="GeneID" id="64927"/>
<dbReference type="KEGG" id="hsa:64927"/>
<dbReference type="MANE-Select" id="ENST00000394132.7">
    <property type="protein sequence ID" value="ENSP00000377690.2"/>
    <property type="RefSeq nucleotide sequence ID" value="NM_001288615.3"/>
    <property type="RefSeq protein sequence ID" value="NP_001275544.1"/>
</dbReference>
<dbReference type="UCSC" id="uc002buy.5">
    <molecule id="Q5W5X9-1"/>
    <property type="organism name" value="human"/>
</dbReference>
<dbReference type="AGR" id="HGNC:25730"/>
<dbReference type="CTD" id="64927"/>
<dbReference type="GeneCards" id="TTC23"/>
<dbReference type="HGNC" id="HGNC:25730">
    <property type="gene designation" value="TTC23"/>
</dbReference>
<dbReference type="HPA" id="ENSG00000103852">
    <property type="expression patterns" value="Low tissue specificity"/>
</dbReference>
<dbReference type="neXtProt" id="NX_Q5W5X9"/>
<dbReference type="OpenTargets" id="ENSG00000103852"/>
<dbReference type="PharmGKB" id="PA142670675"/>
<dbReference type="VEuPathDB" id="HostDB:ENSG00000103852"/>
<dbReference type="eggNOG" id="ENOG502RQY0">
    <property type="taxonomic scope" value="Eukaryota"/>
</dbReference>
<dbReference type="GeneTree" id="ENSGT00530000063847"/>
<dbReference type="HOGENOM" id="CLU_030458_0_0_1"/>
<dbReference type="InParanoid" id="Q5W5X9"/>
<dbReference type="OMA" id="VYKDMAA"/>
<dbReference type="OrthoDB" id="9986634at2759"/>
<dbReference type="PAN-GO" id="Q5W5X9">
    <property type="GO annotations" value="0 GO annotations based on evolutionary models"/>
</dbReference>
<dbReference type="PhylomeDB" id="Q5W5X9"/>
<dbReference type="TreeFam" id="TF332604"/>
<dbReference type="PathwayCommons" id="Q5W5X9"/>
<dbReference type="SignaLink" id="Q5W5X9"/>
<dbReference type="BioGRID-ORCS" id="64927">
    <property type="hits" value="8 hits in 1155 CRISPR screens"/>
</dbReference>
<dbReference type="ChiTaRS" id="TTC23">
    <property type="organism name" value="human"/>
</dbReference>
<dbReference type="GenomeRNAi" id="64927"/>
<dbReference type="Pharos" id="Q5W5X9">
    <property type="development level" value="Tdark"/>
</dbReference>
<dbReference type="PRO" id="PR:Q5W5X9"/>
<dbReference type="Proteomes" id="UP000005640">
    <property type="component" value="Chromosome 15"/>
</dbReference>
<dbReference type="RNAct" id="Q5W5X9">
    <property type="molecule type" value="protein"/>
</dbReference>
<dbReference type="Bgee" id="ENSG00000103852">
    <property type="expression patterns" value="Expressed in lower esophagus muscularis layer and 117 other cell types or tissues"/>
</dbReference>
<dbReference type="ExpressionAtlas" id="Q5W5X9">
    <property type="expression patterns" value="baseline and differential"/>
</dbReference>
<dbReference type="GO" id="GO:0005929">
    <property type="term" value="C:cilium"/>
    <property type="evidence" value="ECO:0000250"/>
    <property type="project" value="UniProtKB"/>
</dbReference>
<dbReference type="GO" id="GO:0045880">
    <property type="term" value="P:positive regulation of smoothened signaling pathway"/>
    <property type="evidence" value="ECO:0000250"/>
    <property type="project" value="UniProtKB"/>
</dbReference>
<dbReference type="Gene3D" id="1.25.40.10">
    <property type="entry name" value="Tetratricopeptide repeat domain"/>
    <property type="match status" value="3"/>
</dbReference>
<dbReference type="InterPro" id="IPR011990">
    <property type="entry name" value="TPR-like_helical_dom_sf"/>
</dbReference>
<dbReference type="InterPro" id="IPR019734">
    <property type="entry name" value="TPR_rpt"/>
</dbReference>
<dbReference type="InterPro" id="IPR042621">
    <property type="entry name" value="TTC23/TTC23L"/>
</dbReference>
<dbReference type="PANTHER" id="PTHR14485">
    <property type="entry name" value="TETRATRICOPEPTIDE REPEAT PROTEIN 23"/>
    <property type="match status" value="1"/>
</dbReference>
<dbReference type="PANTHER" id="PTHR14485:SF3">
    <property type="entry name" value="TETRATRICOPEPTIDE REPEAT PROTEIN 23"/>
    <property type="match status" value="1"/>
</dbReference>
<dbReference type="Pfam" id="PF13424">
    <property type="entry name" value="TPR_12"/>
    <property type="match status" value="1"/>
</dbReference>
<dbReference type="SMART" id="SM00028">
    <property type="entry name" value="TPR"/>
    <property type="match status" value="4"/>
</dbReference>
<dbReference type="SUPFAM" id="SSF48452">
    <property type="entry name" value="TPR-like"/>
    <property type="match status" value="3"/>
</dbReference>
<accession>Q5W5X9</accession>
<accession>A8K6M5</accession>
<accession>Q53HK0</accession>
<accession>Q96BC9</accession>
<accession>Q9H8W9</accession>
<accession>Q9H9S7</accession>